<feature type="chain" id="PRO_1000205029" description="Prefoldin subunit alpha">
    <location>
        <begin position="1"/>
        <end position="147"/>
    </location>
</feature>
<keyword id="KW-0143">Chaperone</keyword>
<keyword id="KW-0963">Cytoplasm</keyword>
<protein>
    <recommendedName>
        <fullName evidence="1">Prefoldin subunit alpha</fullName>
    </recommendedName>
    <alternativeName>
        <fullName evidence="1">GimC subunit alpha</fullName>
    </alternativeName>
</protein>
<name>PFDA_SACI1</name>
<organism>
    <name type="scientific">Saccharolobus islandicus (strain Y.N.15.51 / Yellowstone #2)</name>
    <name type="common">Sulfolobus islandicus</name>
    <dbReference type="NCBI Taxonomy" id="419942"/>
    <lineage>
        <taxon>Archaea</taxon>
        <taxon>Thermoproteota</taxon>
        <taxon>Thermoprotei</taxon>
        <taxon>Sulfolobales</taxon>
        <taxon>Sulfolobaceae</taxon>
        <taxon>Saccharolobus</taxon>
    </lineage>
</organism>
<gene>
    <name evidence="1" type="primary">pfdA</name>
    <name type="ordered locus">YN1551_1052</name>
</gene>
<reference key="1">
    <citation type="journal article" date="2009" name="Proc. Natl. Acad. Sci. U.S.A.">
        <title>Biogeography of the Sulfolobus islandicus pan-genome.</title>
        <authorList>
            <person name="Reno M.L."/>
            <person name="Held N.L."/>
            <person name="Fields C.J."/>
            <person name="Burke P.V."/>
            <person name="Whitaker R.J."/>
        </authorList>
    </citation>
    <scope>NUCLEOTIDE SEQUENCE [LARGE SCALE GENOMIC DNA]</scope>
    <source>
        <strain>Y.N.15.51 / Yellowstone #2</strain>
    </source>
</reference>
<comment type="function">
    <text evidence="1">Molecular chaperone capable of stabilizing a range of proteins. Seems to fulfill an ATP-independent, HSP70-like function in archaeal de novo protein folding.</text>
</comment>
<comment type="subunit">
    <text evidence="1">Heterohexamer of two alpha and four beta subunits.</text>
</comment>
<comment type="subcellular location">
    <subcellularLocation>
        <location evidence="1">Cytoplasm</location>
    </subcellularLocation>
</comment>
<comment type="similarity">
    <text evidence="1">Belongs to the prefoldin alpha subunit family.</text>
</comment>
<evidence type="ECO:0000255" key="1">
    <source>
        <dbReference type="HAMAP-Rule" id="MF_00308"/>
    </source>
</evidence>
<accession>C3NG99</accession>
<dbReference type="EMBL" id="CP001404">
    <property type="protein sequence ID" value="ACP48159.1"/>
    <property type="molecule type" value="Genomic_DNA"/>
</dbReference>
<dbReference type="RefSeq" id="WP_012717317.1">
    <property type="nucleotide sequence ID" value="NC_012623.1"/>
</dbReference>
<dbReference type="SMR" id="C3NG99"/>
<dbReference type="GeneID" id="7809665"/>
<dbReference type="KEGG" id="sin:YN1551_1052"/>
<dbReference type="HOGENOM" id="CLU_1792160_0_0_2"/>
<dbReference type="Proteomes" id="UP000006818">
    <property type="component" value="Chromosome"/>
</dbReference>
<dbReference type="GO" id="GO:0005737">
    <property type="term" value="C:cytoplasm"/>
    <property type="evidence" value="ECO:0007669"/>
    <property type="project" value="UniProtKB-SubCell"/>
</dbReference>
<dbReference type="GO" id="GO:0016272">
    <property type="term" value="C:prefoldin complex"/>
    <property type="evidence" value="ECO:0007669"/>
    <property type="project" value="UniProtKB-UniRule"/>
</dbReference>
<dbReference type="GO" id="GO:0051082">
    <property type="term" value="F:unfolded protein binding"/>
    <property type="evidence" value="ECO:0007669"/>
    <property type="project" value="UniProtKB-UniRule"/>
</dbReference>
<dbReference type="GO" id="GO:0006457">
    <property type="term" value="P:protein folding"/>
    <property type="evidence" value="ECO:0007669"/>
    <property type="project" value="UniProtKB-UniRule"/>
</dbReference>
<dbReference type="CDD" id="cd00584">
    <property type="entry name" value="Prefoldin_alpha"/>
    <property type="match status" value="1"/>
</dbReference>
<dbReference type="FunFam" id="1.10.287.370:FF:000019">
    <property type="entry name" value="Prefoldin subunit alpha"/>
    <property type="match status" value="1"/>
</dbReference>
<dbReference type="Gene3D" id="1.10.287.370">
    <property type="match status" value="1"/>
</dbReference>
<dbReference type="HAMAP" id="MF_00308">
    <property type="entry name" value="PfdA"/>
    <property type="match status" value="1"/>
</dbReference>
<dbReference type="InterPro" id="IPR011599">
    <property type="entry name" value="PFD_alpha_archaea"/>
</dbReference>
<dbReference type="InterPro" id="IPR009053">
    <property type="entry name" value="Prefoldin"/>
</dbReference>
<dbReference type="InterPro" id="IPR004127">
    <property type="entry name" value="Prefoldin_subunit_alpha"/>
</dbReference>
<dbReference type="NCBIfam" id="TIGR00293">
    <property type="entry name" value="prefoldin subunit alpha"/>
    <property type="match status" value="1"/>
</dbReference>
<dbReference type="PANTHER" id="PTHR12674">
    <property type="entry name" value="PREFOLDIN SUBUNIT 5"/>
    <property type="match status" value="1"/>
</dbReference>
<dbReference type="PANTHER" id="PTHR12674:SF2">
    <property type="entry name" value="PREFOLDIN SUBUNIT 5"/>
    <property type="match status" value="1"/>
</dbReference>
<dbReference type="Pfam" id="PF02996">
    <property type="entry name" value="Prefoldin"/>
    <property type="match status" value="1"/>
</dbReference>
<dbReference type="SUPFAM" id="SSF46579">
    <property type="entry name" value="Prefoldin"/>
    <property type="match status" value="1"/>
</dbReference>
<proteinExistence type="inferred from homology"/>
<sequence>MSQGQGGITLDDLIAQADYLKRYIDSLQRTQLELLESINSIDSAKQAIETIKSGNKEMLVFIDRKGYLLAKVGGVVGDKVTVHLGLSYYAEVDLDSAIKILDKRKDEISKAAQNLNNELQKAASTYNQIVDILNQIQQAAARRQQGE</sequence>